<protein>
    <recommendedName>
        <fullName evidence="1">2,3,4,5-tetrahydropyridine-2,6-dicarboxylate N-acetyltransferase</fullName>
        <ecNumber evidence="1">2.3.1.89</ecNumber>
    </recommendedName>
    <alternativeName>
        <fullName evidence="1">Tetrahydrodipicolinate N-acetyltransferase</fullName>
        <shortName evidence="1">THP acetyltransferase</shortName>
        <shortName evidence="1">Tetrahydropicolinate acetylase</shortName>
    </alternativeName>
</protein>
<feature type="chain" id="PRO_0000376641" description="2,3,4,5-tetrahydropyridine-2,6-dicarboxylate N-acetyltransferase">
    <location>
        <begin position="1"/>
        <end position="240"/>
    </location>
</feature>
<sequence length="240" mass="25705">MKMMDANEIISFIQNSEKKTPVKVYIKGDLKEVTFPETVQAFVNKKSGVLFGEWSEIKTILDENNKHIVDYVVENDRRNSAIPMLDLKGIKARIEPGAIIRDHVEIGDNAVIMMNATINIGAVIGEGTMIDMNAVLGGRATVGKNCHVGAGAVLAGVIEPPSAKPVIVEDDVVIGANVVVLEGVTVGKGAVVAAGAVVTEDVPPYTVVAGTPARVIKEIDEKTKAKTEIKQELRQLNPEK</sequence>
<comment type="function">
    <text evidence="1">Catalyzes the transfer of an acetyl group from acetyl-CoA to tetrahydrodipicolinate.</text>
</comment>
<comment type="catalytic activity">
    <reaction evidence="1">
        <text>(S)-2,3,4,5-tetrahydrodipicolinate + acetyl-CoA + H2O = L-2-acetamido-6-oxoheptanedioate + CoA</text>
        <dbReference type="Rhea" id="RHEA:13085"/>
        <dbReference type="ChEBI" id="CHEBI:15377"/>
        <dbReference type="ChEBI" id="CHEBI:16845"/>
        <dbReference type="ChEBI" id="CHEBI:57287"/>
        <dbReference type="ChEBI" id="CHEBI:57288"/>
        <dbReference type="ChEBI" id="CHEBI:58117"/>
        <dbReference type="EC" id="2.3.1.89"/>
    </reaction>
</comment>
<comment type="pathway">
    <text evidence="1">Amino-acid biosynthesis; L-lysine biosynthesis via DAP pathway; LL-2,6-diaminopimelate from (S)-tetrahydrodipicolinate (acetylase route): step 1/3.</text>
</comment>
<comment type="similarity">
    <text evidence="1">Belongs to the transferase hexapeptide repeat family. DapH subfamily.</text>
</comment>
<dbReference type="EC" id="2.3.1.89" evidence="1"/>
<dbReference type="EMBL" id="CP000903">
    <property type="protein sequence ID" value="ABY44977.1"/>
    <property type="molecule type" value="Genomic_DNA"/>
</dbReference>
<dbReference type="SMR" id="A9VUE3"/>
<dbReference type="KEGG" id="bwe:BcerKBAB4_3808"/>
<dbReference type="eggNOG" id="COG2171">
    <property type="taxonomic scope" value="Bacteria"/>
</dbReference>
<dbReference type="HOGENOM" id="CLU_103751_0_0_9"/>
<dbReference type="UniPathway" id="UPA00034">
    <property type="reaction ID" value="UER00022"/>
</dbReference>
<dbReference type="Proteomes" id="UP000002154">
    <property type="component" value="Chromosome"/>
</dbReference>
<dbReference type="GO" id="GO:0047200">
    <property type="term" value="F:tetrahydrodipicolinate N-acetyltransferase activity"/>
    <property type="evidence" value="ECO:0007669"/>
    <property type="project" value="UniProtKB-EC"/>
</dbReference>
<dbReference type="GO" id="GO:0019877">
    <property type="term" value="P:diaminopimelate biosynthetic process"/>
    <property type="evidence" value="ECO:0007669"/>
    <property type="project" value="UniProtKB-UniRule"/>
</dbReference>
<dbReference type="GO" id="GO:0009089">
    <property type="term" value="P:lysine biosynthetic process via diaminopimelate"/>
    <property type="evidence" value="ECO:0007669"/>
    <property type="project" value="UniProtKB-UniRule"/>
</dbReference>
<dbReference type="CDD" id="cd03350">
    <property type="entry name" value="LbH_THP_succinylT"/>
    <property type="match status" value="1"/>
</dbReference>
<dbReference type="Gene3D" id="2.160.10.10">
    <property type="entry name" value="Hexapeptide repeat proteins"/>
    <property type="match status" value="1"/>
</dbReference>
<dbReference type="Gene3D" id="3.30.70.250">
    <property type="entry name" value="Malonyl-CoA ACP transacylase, ACP-binding"/>
    <property type="match status" value="1"/>
</dbReference>
<dbReference type="HAMAP" id="MF_01691">
    <property type="entry name" value="DapH"/>
    <property type="match status" value="1"/>
</dbReference>
<dbReference type="InterPro" id="IPR019873">
    <property type="entry name" value="DapH"/>
</dbReference>
<dbReference type="InterPro" id="IPR013710">
    <property type="entry name" value="DapH_N"/>
</dbReference>
<dbReference type="InterPro" id="IPR001451">
    <property type="entry name" value="Hexapep"/>
</dbReference>
<dbReference type="InterPro" id="IPR018357">
    <property type="entry name" value="Hexapep_transf_CS"/>
</dbReference>
<dbReference type="InterPro" id="IPR050179">
    <property type="entry name" value="Trans_hexapeptide_repeat"/>
</dbReference>
<dbReference type="InterPro" id="IPR011004">
    <property type="entry name" value="Trimer_LpxA-like_sf"/>
</dbReference>
<dbReference type="NCBIfam" id="TIGR03532">
    <property type="entry name" value="DapD_Ac"/>
    <property type="match status" value="1"/>
</dbReference>
<dbReference type="PANTHER" id="PTHR43300:SF10">
    <property type="entry name" value="2,3,4,5-TETRAHYDROPYRIDINE-2,6-DICARBOXYLATE N-ACETYLTRANSFERASE"/>
    <property type="match status" value="1"/>
</dbReference>
<dbReference type="PANTHER" id="PTHR43300">
    <property type="entry name" value="ACETYLTRANSFERASE"/>
    <property type="match status" value="1"/>
</dbReference>
<dbReference type="Pfam" id="PF08503">
    <property type="entry name" value="DapH_N"/>
    <property type="match status" value="1"/>
</dbReference>
<dbReference type="Pfam" id="PF00132">
    <property type="entry name" value="Hexapep"/>
    <property type="match status" value="1"/>
</dbReference>
<dbReference type="Pfam" id="PF14602">
    <property type="entry name" value="Hexapep_2"/>
    <property type="match status" value="1"/>
</dbReference>
<dbReference type="SUPFAM" id="SSF51161">
    <property type="entry name" value="Trimeric LpxA-like enzymes"/>
    <property type="match status" value="1"/>
</dbReference>
<dbReference type="PROSITE" id="PS00101">
    <property type="entry name" value="HEXAPEP_TRANSFERASES"/>
    <property type="match status" value="1"/>
</dbReference>
<proteinExistence type="inferred from homology"/>
<organism>
    <name type="scientific">Bacillus mycoides (strain KBAB4)</name>
    <name type="common">Bacillus weihenstephanensis</name>
    <dbReference type="NCBI Taxonomy" id="315730"/>
    <lineage>
        <taxon>Bacteria</taxon>
        <taxon>Bacillati</taxon>
        <taxon>Bacillota</taxon>
        <taxon>Bacilli</taxon>
        <taxon>Bacillales</taxon>
        <taxon>Bacillaceae</taxon>
        <taxon>Bacillus</taxon>
        <taxon>Bacillus cereus group</taxon>
    </lineage>
</organism>
<evidence type="ECO:0000255" key="1">
    <source>
        <dbReference type="HAMAP-Rule" id="MF_01691"/>
    </source>
</evidence>
<reference key="1">
    <citation type="journal article" date="2008" name="Chem. Biol. Interact.">
        <title>Extending the Bacillus cereus group genomics to putative food-borne pathogens of different toxicity.</title>
        <authorList>
            <person name="Lapidus A."/>
            <person name="Goltsman E."/>
            <person name="Auger S."/>
            <person name="Galleron N."/>
            <person name="Segurens B."/>
            <person name="Dossat C."/>
            <person name="Land M.L."/>
            <person name="Broussolle V."/>
            <person name="Brillard J."/>
            <person name="Guinebretiere M.-H."/>
            <person name="Sanchis V."/>
            <person name="Nguen-the C."/>
            <person name="Lereclus D."/>
            <person name="Richardson P."/>
            <person name="Wincker P."/>
            <person name="Weissenbach J."/>
            <person name="Ehrlich S.D."/>
            <person name="Sorokin A."/>
        </authorList>
    </citation>
    <scope>NUCLEOTIDE SEQUENCE [LARGE SCALE GENOMIC DNA]</scope>
    <source>
        <strain>KBAB4</strain>
    </source>
</reference>
<name>DAPH_BACMK</name>
<accession>A9VUE3</accession>
<gene>
    <name evidence="1" type="primary">dapH</name>
    <name type="ordered locus">BcerKBAB4_3808</name>
</gene>
<keyword id="KW-0012">Acyltransferase</keyword>
<keyword id="KW-0028">Amino-acid biosynthesis</keyword>
<keyword id="KW-0220">Diaminopimelate biosynthesis</keyword>
<keyword id="KW-0457">Lysine biosynthesis</keyword>
<keyword id="KW-0677">Repeat</keyword>
<keyword id="KW-0808">Transferase</keyword>